<proteinExistence type="evidence at protein level"/>
<dbReference type="SMR" id="P80589"/>
<dbReference type="GO" id="GO:0019866">
    <property type="term" value="C:organelle inner membrane"/>
    <property type="evidence" value="ECO:0007669"/>
    <property type="project" value="InterPro"/>
</dbReference>
<dbReference type="GO" id="GO:0005886">
    <property type="term" value="C:plasma membrane"/>
    <property type="evidence" value="ECO:0007669"/>
    <property type="project" value="UniProtKB-SubCell"/>
</dbReference>
<dbReference type="GO" id="GO:0030077">
    <property type="term" value="C:plasma membrane light-harvesting complex"/>
    <property type="evidence" value="ECO:0007669"/>
    <property type="project" value="InterPro"/>
</dbReference>
<dbReference type="GO" id="GO:0042314">
    <property type="term" value="F:bacteriochlorophyll binding"/>
    <property type="evidence" value="ECO:0007669"/>
    <property type="project" value="UniProtKB-KW"/>
</dbReference>
<dbReference type="GO" id="GO:0045156">
    <property type="term" value="F:electron transporter, transferring electrons within the cyclic electron transport pathway of photosynthesis activity"/>
    <property type="evidence" value="ECO:0007669"/>
    <property type="project" value="InterPro"/>
</dbReference>
<dbReference type="GO" id="GO:0046872">
    <property type="term" value="F:metal ion binding"/>
    <property type="evidence" value="ECO:0007669"/>
    <property type="project" value="UniProtKB-KW"/>
</dbReference>
<dbReference type="GO" id="GO:0019684">
    <property type="term" value="P:photosynthesis, light reaction"/>
    <property type="evidence" value="ECO:0007669"/>
    <property type="project" value="InterPro"/>
</dbReference>
<dbReference type="Gene3D" id="4.10.220.20">
    <property type="entry name" value="Light-harvesting complex"/>
    <property type="match status" value="1"/>
</dbReference>
<dbReference type="InterPro" id="IPR000066">
    <property type="entry name" value="Antenna_a/b"/>
</dbReference>
<dbReference type="InterPro" id="IPR018332">
    <property type="entry name" value="Antenna_alpha"/>
</dbReference>
<dbReference type="InterPro" id="IPR002361">
    <property type="entry name" value="Antenna_alpha_CS"/>
</dbReference>
<dbReference type="InterPro" id="IPR035889">
    <property type="entry name" value="Light-harvesting_complex"/>
</dbReference>
<dbReference type="NCBIfam" id="NF040861">
    <property type="entry name" value="pufA_517_ASD"/>
    <property type="match status" value="1"/>
</dbReference>
<dbReference type="Pfam" id="PF00556">
    <property type="entry name" value="LHC"/>
    <property type="match status" value="1"/>
</dbReference>
<dbReference type="PRINTS" id="PR00673">
    <property type="entry name" value="LIGHTHARVSTA"/>
</dbReference>
<dbReference type="SUPFAM" id="SSF56918">
    <property type="entry name" value="Light-harvesting complex subunits"/>
    <property type="match status" value="1"/>
</dbReference>
<dbReference type="PROSITE" id="PS00968">
    <property type="entry name" value="ANTENNA_COMP_ALPHA"/>
    <property type="match status" value="1"/>
</dbReference>
<feature type="chain" id="PRO_0000099808" description="Light-harvesting polypeptide B-885 alpha-2 chain">
    <location>
        <begin position="1"/>
        <end position="60"/>
    </location>
</feature>
<feature type="topological domain" description="Cytoplasmic" evidence="1">
    <location>
        <begin position="1"/>
        <end position="16"/>
    </location>
</feature>
<feature type="transmembrane region" description="Helical" evidence="1">
    <location>
        <begin position="17"/>
        <end position="37"/>
    </location>
</feature>
<feature type="topological domain" description="Periplasmic" evidence="1">
    <location>
        <begin position="38"/>
        <end position="60"/>
    </location>
</feature>
<feature type="binding site" description="axial binding residue" evidence="1">
    <location>
        <position position="33"/>
    </location>
    <ligand>
        <name>a bacteriochlorophyll</name>
        <dbReference type="ChEBI" id="CHEBI:38201"/>
    </ligand>
    <ligandPart>
        <name>Mg</name>
        <dbReference type="ChEBI" id="CHEBI:25107"/>
    </ligandPart>
</feature>
<keyword id="KW-0042">Antenna complex</keyword>
<keyword id="KW-0076">Bacteriochlorophyll</keyword>
<keyword id="KW-0997">Cell inner membrane</keyword>
<keyword id="KW-1003">Cell membrane</keyword>
<keyword id="KW-0148">Chlorophyll</keyword>
<keyword id="KW-0157">Chromophore</keyword>
<keyword id="KW-0903">Direct protein sequencing</keyword>
<keyword id="KW-0437">Light-harvesting polypeptide</keyword>
<keyword id="KW-0460">Magnesium</keyword>
<keyword id="KW-0472">Membrane</keyword>
<keyword id="KW-0479">Metal-binding</keyword>
<keyword id="KW-0812">Transmembrane</keyword>
<keyword id="KW-1133">Transmembrane helix</keyword>
<reference key="1">
    <citation type="journal article" date="1996" name="Eur. J. Biochem.">
        <title>The antenna complexes of the purple non-sulfur photosynthetic bacterium Rhodocyclus tenuis. Structural and spectral characterization.</title>
        <authorList>
            <person name="Hu Q."/>
            <person name="Brunisholz R.A."/>
            <person name="Frank G."/>
            <person name="Zuber H."/>
        </authorList>
    </citation>
    <scope>PROTEIN SEQUENCE</scope>
    <source>
        <strain>ATCC 25093 / DSM 109 / 2761</strain>
    </source>
</reference>
<sequence length="60" mass="6635">SAPAQWKLWLVMDPRTVMIGTAAWLGVLALLIHFLLLGTERFNWIDTGLKEQKATAAAQA</sequence>
<organism>
    <name type="scientific">Rhodocyclus tenuis</name>
    <name type="common">Rhodospirillum tenue</name>
    <dbReference type="NCBI Taxonomy" id="1066"/>
    <lineage>
        <taxon>Bacteria</taxon>
        <taxon>Pseudomonadati</taxon>
        <taxon>Pseudomonadota</taxon>
        <taxon>Betaproteobacteria</taxon>
        <taxon>Rhodocyclales</taxon>
        <taxon>Rhodocyclaceae</taxon>
        <taxon>Rhodocyclus</taxon>
    </lineage>
</organism>
<evidence type="ECO:0000255" key="1"/>
<evidence type="ECO:0000305" key="2"/>
<name>LHA2_RHOTE</name>
<accession>P80589</accession>
<protein>
    <recommendedName>
        <fullName>Light-harvesting polypeptide B-885 alpha-2 chain</fullName>
    </recommendedName>
    <alternativeName>
        <fullName>Antenna pigment polypeptide alpha-2 chain</fullName>
    </alternativeName>
    <alternativeName>
        <fullName>LH-1</fullName>
    </alternativeName>
</protein>
<comment type="function">
    <text>Antenna complexes are light-harvesting systems, which transfer the excitation energy to the reaction centers.</text>
</comment>
<comment type="subunit">
    <text>The core complex is formed by different alpha and beta chains, binding bacteriochlorophyll molecules, and arranged most probably in tetrameric structures disposed around the reaction center. The non-pigmented gamma chains may constitute additional components.</text>
</comment>
<comment type="subcellular location">
    <subcellularLocation>
        <location>Cell inner membrane</location>
        <topology>Single-pass type II membrane protein</topology>
    </subcellularLocation>
</comment>
<comment type="similarity">
    <text evidence="2">Belongs to the antenna complex alpha subunit family.</text>
</comment>